<feature type="chain" id="PRO_1000024880" description="Ribonuclease PH">
    <location>
        <begin position="1"/>
        <end position="237"/>
    </location>
</feature>
<feature type="binding site" evidence="1">
    <location>
        <position position="86"/>
    </location>
    <ligand>
        <name>phosphate</name>
        <dbReference type="ChEBI" id="CHEBI:43474"/>
        <note>substrate</note>
    </ligand>
</feature>
<feature type="binding site" evidence="1">
    <location>
        <begin position="124"/>
        <end position="126"/>
    </location>
    <ligand>
        <name>phosphate</name>
        <dbReference type="ChEBI" id="CHEBI:43474"/>
        <note>substrate</note>
    </ligand>
</feature>
<comment type="function">
    <text evidence="1">Phosphorolytic 3'-5' exoribonuclease that plays an important role in tRNA 3'-end maturation. Removes nucleotide residues following the 3'-CCA terminus of tRNAs; can also add nucleotides to the ends of RNA molecules by using nucleoside diphosphates as substrates, but this may not be physiologically important. Probably plays a role in initiation of 16S rRNA degradation (leading to ribosome degradation) during starvation.</text>
</comment>
<comment type="catalytic activity">
    <reaction evidence="1">
        <text>tRNA(n+1) + phosphate = tRNA(n) + a ribonucleoside 5'-diphosphate</text>
        <dbReference type="Rhea" id="RHEA:10628"/>
        <dbReference type="Rhea" id="RHEA-COMP:17343"/>
        <dbReference type="Rhea" id="RHEA-COMP:17344"/>
        <dbReference type="ChEBI" id="CHEBI:43474"/>
        <dbReference type="ChEBI" id="CHEBI:57930"/>
        <dbReference type="ChEBI" id="CHEBI:173114"/>
        <dbReference type="EC" id="2.7.7.56"/>
    </reaction>
</comment>
<comment type="subunit">
    <text evidence="1">Homohexameric ring arranged as a trimer of dimers.</text>
</comment>
<comment type="similarity">
    <text evidence="1">Belongs to the RNase PH family.</text>
</comment>
<reference key="1">
    <citation type="submission" date="2007-07" db="EMBL/GenBank/DDBJ databases">
        <title>Complete sequence of chromosome of Shewanella baltica OS185.</title>
        <authorList>
            <consortium name="US DOE Joint Genome Institute"/>
            <person name="Copeland A."/>
            <person name="Lucas S."/>
            <person name="Lapidus A."/>
            <person name="Barry K."/>
            <person name="Glavina del Rio T."/>
            <person name="Dalin E."/>
            <person name="Tice H."/>
            <person name="Pitluck S."/>
            <person name="Sims D."/>
            <person name="Brettin T."/>
            <person name="Bruce D."/>
            <person name="Detter J.C."/>
            <person name="Han C."/>
            <person name="Schmutz J."/>
            <person name="Larimer F."/>
            <person name="Land M."/>
            <person name="Hauser L."/>
            <person name="Kyrpides N."/>
            <person name="Mikhailova N."/>
            <person name="Brettar I."/>
            <person name="Rodrigues J."/>
            <person name="Konstantinidis K."/>
            <person name="Tiedje J."/>
            <person name="Richardson P."/>
        </authorList>
    </citation>
    <scope>NUCLEOTIDE SEQUENCE [LARGE SCALE GENOMIC DNA]</scope>
    <source>
        <strain>OS185</strain>
    </source>
</reference>
<keyword id="KW-0548">Nucleotidyltransferase</keyword>
<keyword id="KW-0694">RNA-binding</keyword>
<keyword id="KW-0698">rRNA processing</keyword>
<keyword id="KW-0808">Transferase</keyword>
<keyword id="KW-0819">tRNA processing</keyword>
<keyword id="KW-0820">tRNA-binding</keyword>
<accession>A6WI99</accession>
<gene>
    <name evidence="1" type="primary">rph</name>
    <name type="ordered locus">Shew185_0369</name>
</gene>
<dbReference type="EC" id="2.7.7.56" evidence="1"/>
<dbReference type="EMBL" id="CP000753">
    <property type="protein sequence ID" value="ABS06538.1"/>
    <property type="molecule type" value="Genomic_DNA"/>
</dbReference>
<dbReference type="RefSeq" id="WP_006079862.1">
    <property type="nucleotide sequence ID" value="NC_009665.1"/>
</dbReference>
<dbReference type="SMR" id="A6WI99"/>
<dbReference type="GeneID" id="11770720"/>
<dbReference type="KEGG" id="sbm:Shew185_0369"/>
<dbReference type="HOGENOM" id="CLU_050858_0_0_6"/>
<dbReference type="GO" id="GO:0000175">
    <property type="term" value="F:3'-5'-RNA exonuclease activity"/>
    <property type="evidence" value="ECO:0007669"/>
    <property type="project" value="UniProtKB-UniRule"/>
</dbReference>
<dbReference type="GO" id="GO:0000049">
    <property type="term" value="F:tRNA binding"/>
    <property type="evidence" value="ECO:0007669"/>
    <property type="project" value="UniProtKB-UniRule"/>
</dbReference>
<dbReference type="GO" id="GO:0009022">
    <property type="term" value="F:tRNA nucleotidyltransferase activity"/>
    <property type="evidence" value="ECO:0007669"/>
    <property type="project" value="UniProtKB-UniRule"/>
</dbReference>
<dbReference type="GO" id="GO:0016075">
    <property type="term" value="P:rRNA catabolic process"/>
    <property type="evidence" value="ECO:0007669"/>
    <property type="project" value="UniProtKB-UniRule"/>
</dbReference>
<dbReference type="GO" id="GO:0006364">
    <property type="term" value="P:rRNA processing"/>
    <property type="evidence" value="ECO:0007669"/>
    <property type="project" value="UniProtKB-KW"/>
</dbReference>
<dbReference type="GO" id="GO:0008033">
    <property type="term" value="P:tRNA processing"/>
    <property type="evidence" value="ECO:0007669"/>
    <property type="project" value="UniProtKB-UniRule"/>
</dbReference>
<dbReference type="CDD" id="cd11362">
    <property type="entry name" value="RNase_PH_bact"/>
    <property type="match status" value="1"/>
</dbReference>
<dbReference type="FunFam" id="3.30.230.70:FF:000003">
    <property type="entry name" value="Ribonuclease PH"/>
    <property type="match status" value="1"/>
</dbReference>
<dbReference type="Gene3D" id="3.30.230.70">
    <property type="entry name" value="GHMP Kinase, N-terminal domain"/>
    <property type="match status" value="1"/>
</dbReference>
<dbReference type="HAMAP" id="MF_00564">
    <property type="entry name" value="RNase_PH"/>
    <property type="match status" value="1"/>
</dbReference>
<dbReference type="InterPro" id="IPR001247">
    <property type="entry name" value="ExoRNase_PH_dom1"/>
</dbReference>
<dbReference type="InterPro" id="IPR015847">
    <property type="entry name" value="ExoRNase_PH_dom2"/>
</dbReference>
<dbReference type="InterPro" id="IPR036345">
    <property type="entry name" value="ExoRNase_PH_dom2_sf"/>
</dbReference>
<dbReference type="InterPro" id="IPR027408">
    <property type="entry name" value="PNPase/RNase_PH_dom_sf"/>
</dbReference>
<dbReference type="InterPro" id="IPR020568">
    <property type="entry name" value="Ribosomal_Su5_D2-typ_SF"/>
</dbReference>
<dbReference type="InterPro" id="IPR050080">
    <property type="entry name" value="RNase_PH"/>
</dbReference>
<dbReference type="InterPro" id="IPR002381">
    <property type="entry name" value="RNase_PH_bac-type"/>
</dbReference>
<dbReference type="InterPro" id="IPR018336">
    <property type="entry name" value="RNase_PH_CS"/>
</dbReference>
<dbReference type="NCBIfam" id="TIGR01966">
    <property type="entry name" value="RNasePH"/>
    <property type="match status" value="1"/>
</dbReference>
<dbReference type="PANTHER" id="PTHR11953">
    <property type="entry name" value="EXOSOME COMPLEX COMPONENT"/>
    <property type="match status" value="1"/>
</dbReference>
<dbReference type="PANTHER" id="PTHR11953:SF0">
    <property type="entry name" value="EXOSOME COMPLEX COMPONENT RRP41"/>
    <property type="match status" value="1"/>
</dbReference>
<dbReference type="Pfam" id="PF01138">
    <property type="entry name" value="RNase_PH"/>
    <property type="match status" value="1"/>
</dbReference>
<dbReference type="Pfam" id="PF03725">
    <property type="entry name" value="RNase_PH_C"/>
    <property type="match status" value="1"/>
</dbReference>
<dbReference type="SUPFAM" id="SSF55666">
    <property type="entry name" value="Ribonuclease PH domain 2-like"/>
    <property type="match status" value="1"/>
</dbReference>
<dbReference type="SUPFAM" id="SSF54211">
    <property type="entry name" value="Ribosomal protein S5 domain 2-like"/>
    <property type="match status" value="1"/>
</dbReference>
<dbReference type="PROSITE" id="PS01277">
    <property type="entry name" value="RIBONUCLEASE_PH"/>
    <property type="match status" value="1"/>
</dbReference>
<name>RNPH_SHEB8</name>
<protein>
    <recommendedName>
        <fullName evidence="1">Ribonuclease PH</fullName>
        <shortName evidence="1">RNase PH</shortName>
        <ecNumber evidence="1">2.7.7.56</ecNumber>
    </recommendedName>
    <alternativeName>
        <fullName evidence="1">tRNA nucleotidyltransferase</fullName>
    </alternativeName>
</protein>
<sequence length="237" mass="25648">MRPSNRTPAQTRPITITRQFTAHAEGSVLVEFGETKVLCTASFTEGVPRFLKGQGQGWVTAEYGMLPRSTHSRMDREAARGKQSGRTQEIQRLIGRALRACVDMKALGENTIVIDCDVIQADGGTRTASITGACVALVDALNWARGKGIIKSNPLKFLIAAVSVGIYKGEAISDLEYIEDSAAETDMNVVMTETGKIIEIQGTAEGEPFSHEELLELLALAKNSIREIVDVQKAALN</sequence>
<proteinExistence type="inferred from homology"/>
<evidence type="ECO:0000255" key="1">
    <source>
        <dbReference type="HAMAP-Rule" id="MF_00564"/>
    </source>
</evidence>
<organism>
    <name type="scientific">Shewanella baltica (strain OS185)</name>
    <dbReference type="NCBI Taxonomy" id="402882"/>
    <lineage>
        <taxon>Bacteria</taxon>
        <taxon>Pseudomonadati</taxon>
        <taxon>Pseudomonadota</taxon>
        <taxon>Gammaproteobacteria</taxon>
        <taxon>Alteromonadales</taxon>
        <taxon>Shewanellaceae</taxon>
        <taxon>Shewanella</taxon>
    </lineage>
</organism>